<proteinExistence type="inferred from homology"/>
<dbReference type="EMBL" id="BX571856">
    <property type="protein sequence ID" value="CAG40957.1"/>
    <property type="status" value="ALT_INIT"/>
    <property type="molecule type" value="Genomic_DNA"/>
</dbReference>
<dbReference type="SMR" id="Q6GFH7"/>
<dbReference type="KEGG" id="sar:SAR1970"/>
<dbReference type="HOGENOM" id="CLU_199533_0_0_9"/>
<dbReference type="Proteomes" id="UP000000596">
    <property type="component" value="Chromosome"/>
</dbReference>
<dbReference type="HAMAP" id="MF_00829">
    <property type="entry name" value="UPF0435"/>
    <property type="match status" value="1"/>
</dbReference>
<dbReference type="InterPro" id="IPR009507">
    <property type="entry name" value="UPF0435"/>
</dbReference>
<dbReference type="Pfam" id="PF06569">
    <property type="entry name" value="DUF1128"/>
    <property type="match status" value="1"/>
</dbReference>
<gene>
    <name type="ordered locus">SAR1970</name>
</gene>
<accession>Q6GFH7</accession>
<name>Y1970_STAAR</name>
<reference key="1">
    <citation type="journal article" date="2004" name="Proc. Natl. Acad. Sci. U.S.A.">
        <title>Complete genomes of two clinical Staphylococcus aureus strains: evidence for the rapid evolution of virulence and drug resistance.</title>
        <authorList>
            <person name="Holden M.T.G."/>
            <person name="Feil E.J."/>
            <person name="Lindsay J.A."/>
            <person name="Peacock S.J."/>
            <person name="Day N.P.J."/>
            <person name="Enright M.C."/>
            <person name="Foster T.J."/>
            <person name="Moore C.E."/>
            <person name="Hurst L."/>
            <person name="Atkin R."/>
            <person name="Barron A."/>
            <person name="Bason N."/>
            <person name="Bentley S.D."/>
            <person name="Chillingworth C."/>
            <person name="Chillingworth T."/>
            <person name="Churcher C."/>
            <person name="Clark L."/>
            <person name="Corton C."/>
            <person name="Cronin A."/>
            <person name="Doggett J."/>
            <person name="Dowd L."/>
            <person name="Feltwell T."/>
            <person name="Hance Z."/>
            <person name="Harris B."/>
            <person name="Hauser H."/>
            <person name="Holroyd S."/>
            <person name="Jagels K."/>
            <person name="James K.D."/>
            <person name="Lennard N."/>
            <person name="Line A."/>
            <person name="Mayes R."/>
            <person name="Moule S."/>
            <person name="Mungall K."/>
            <person name="Ormond D."/>
            <person name="Quail M.A."/>
            <person name="Rabbinowitsch E."/>
            <person name="Rutherford K.M."/>
            <person name="Sanders M."/>
            <person name="Sharp S."/>
            <person name="Simmonds M."/>
            <person name="Stevens K."/>
            <person name="Whitehead S."/>
            <person name="Barrell B.G."/>
            <person name="Spratt B.G."/>
            <person name="Parkhill J."/>
        </authorList>
    </citation>
    <scope>NUCLEOTIDE SEQUENCE [LARGE SCALE GENOMIC DNA]</scope>
    <source>
        <strain>MRSA252</strain>
    </source>
</reference>
<organism>
    <name type="scientific">Staphylococcus aureus (strain MRSA252)</name>
    <dbReference type="NCBI Taxonomy" id="282458"/>
    <lineage>
        <taxon>Bacteria</taxon>
        <taxon>Bacillati</taxon>
        <taxon>Bacillota</taxon>
        <taxon>Bacilli</taxon>
        <taxon>Bacillales</taxon>
        <taxon>Staphylococcaceae</taxon>
        <taxon>Staphylococcus</taxon>
    </lineage>
</organism>
<protein>
    <recommendedName>
        <fullName evidence="1">UPF0435 protein SAR1970</fullName>
    </recommendedName>
</protein>
<sequence>MAMTNEEKVLAIREKLNIVNQGLLDPEKYKNANEEELTDIYDFVQSRERLSPSEVTAIADALGQLRHD</sequence>
<feature type="chain" id="PRO_0000291417" description="UPF0435 protein SAR1970">
    <location>
        <begin position="1"/>
        <end position="68"/>
    </location>
</feature>
<comment type="similarity">
    <text evidence="1">Belongs to the UPF0435 family.</text>
</comment>
<comment type="sequence caution" evidence="2">
    <conflict type="erroneous initiation">
        <sequence resource="EMBL-CDS" id="CAG40957"/>
    </conflict>
</comment>
<evidence type="ECO:0000255" key="1">
    <source>
        <dbReference type="HAMAP-Rule" id="MF_00829"/>
    </source>
</evidence>
<evidence type="ECO:0000305" key="2"/>